<organism>
    <name type="scientific">Hordeum vulgare</name>
    <name type="common">Barley</name>
    <dbReference type="NCBI Taxonomy" id="4513"/>
    <lineage>
        <taxon>Eukaryota</taxon>
        <taxon>Viridiplantae</taxon>
        <taxon>Streptophyta</taxon>
        <taxon>Embryophyta</taxon>
        <taxon>Tracheophyta</taxon>
        <taxon>Spermatophyta</taxon>
        <taxon>Magnoliopsida</taxon>
        <taxon>Liliopsida</taxon>
        <taxon>Poales</taxon>
        <taxon>Poaceae</taxon>
        <taxon>BOP clade</taxon>
        <taxon>Pooideae</taxon>
        <taxon>Triticodae</taxon>
        <taxon>Triticeae</taxon>
        <taxon>Hordeinae</taxon>
        <taxon>Hordeum</taxon>
    </lineage>
</organism>
<feature type="transit peptide" description="Chloroplast" evidence="1">
    <location>
        <begin position="1"/>
        <end position="48"/>
    </location>
</feature>
<feature type="chain" id="PRO_0000030231" description="Ribulose bisphosphate carboxylase/oxygenase activase A, chloroplastic">
    <location>
        <begin position="49"/>
        <end position="464"/>
    </location>
</feature>
<feature type="binding site" evidence="1">
    <location>
        <begin position="155"/>
        <end position="162"/>
    </location>
    <ligand>
        <name>ATP</name>
        <dbReference type="ChEBI" id="CHEBI:30616"/>
    </ligand>
</feature>
<feature type="splice variant" id="VSP_005540" description="In isoform Short." evidence="2">
    <location>
        <begin position="428"/>
        <end position="464"/>
    </location>
</feature>
<feature type="sequence variant" description="In strain: cv. Glen.">
    <original>Y</original>
    <variation>T</variation>
    <location>
        <position position="66"/>
    </location>
</feature>
<feature type="sequence variant" description="In strain: cv. Glen.">
    <original>H</original>
    <variation>D</variation>
    <location>
        <position position="92"/>
    </location>
</feature>
<feature type="sequence variant" description="In strain: cv. Glen.">
    <original>S</original>
    <variation>C</variation>
    <location>
        <position position="316"/>
    </location>
</feature>
<protein>
    <recommendedName>
        <fullName>Ribulose bisphosphate carboxylase/oxygenase activase A, chloroplastic</fullName>
        <shortName>RA A</shortName>
        <shortName>RuBisCO activase A</shortName>
    </recommendedName>
</protein>
<evidence type="ECO:0000255" key="1"/>
<evidence type="ECO:0000303" key="2">
    <source>
    </source>
</evidence>
<evidence type="ECO:0000305" key="3"/>
<dbReference type="EMBL" id="M55449">
    <property type="protein sequence ID" value="AAA63164.1"/>
    <property type="molecule type" value="Genomic_DNA"/>
</dbReference>
<dbReference type="EMBL" id="M55449">
    <property type="protein sequence ID" value="AAA63163.1"/>
    <property type="molecule type" value="Genomic_DNA"/>
</dbReference>
<dbReference type="EMBL" id="M55446">
    <property type="protein sequence ID" value="AAA62701.1"/>
    <property type="molecule type" value="mRNA"/>
</dbReference>
<dbReference type="EMBL" id="M55447">
    <property type="protein sequence ID" value="AAA62702.1"/>
    <property type="molecule type" value="mRNA"/>
</dbReference>
<dbReference type="PIR" id="T06176">
    <property type="entry name" value="T06176"/>
</dbReference>
<dbReference type="SMR" id="Q40073"/>
<dbReference type="ExpressionAtlas" id="Q40073">
    <property type="expression patterns" value="baseline and differential"/>
</dbReference>
<dbReference type="GO" id="GO:0009570">
    <property type="term" value="C:chloroplast stroma"/>
    <property type="evidence" value="ECO:0007669"/>
    <property type="project" value="UniProtKB-SubCell"/>
</dbReference>
<dbReference type="GO" id="GO:0009579">
    <property type="term" value="C:thylakoid"/>
    <property type="evidence" value="ECO:0007669"/>
    <property type="project" value="TreeGrafter"/>
</dbReference>
<dbReference type="GO" id="GO:0005524">
    <property type="term" value="F:ATP binding"/>
    <property type="evidence" value="ECO:0007669"/>
    <property type="project" value="UniProtKB-KW"/>
</dbReference>
<dbReference type="GO" id="GO:0016887">
    <property type="term" value="F:ATP hydrolysis activity"/>
    <property type="evidence" value="ECO:0007669"/>
    <property type="project" value="InterPro"/>
</dbReference>
<dbReference type="GO" id="GO:0046863">
    <property type="term" value="F:ribulose-1,5-bisphosphate carboxylase/oxygenase activator activity"/>
    <property type="evidence" value="ECO:0007669"/>
    <property type="project" value="TreeGrafter"/>
</dbReference>
<dbReference type="FunFam" id="1.10.8.1070:FF:000001">
    <property type="entry name" value="Ribulose bisphosphate carboxylase/oxygenase activase, chloroplastic"/>
    <property type="match status" value="1"/>
</dbReference>
<dbReference type="FunFam" id="3.40.50.300:FF:000258">
    <property type="entry name" value="Ribulose bisphosphate carboxylase/oxygenase activase, chloroplastic"/>
    <property type="match status" value="1"/>
</dbReference>
<dbReference type="Gene3D" id="1.10.8.1070">
    <property type="match status" value="1"/>
</dbReference>
<dbReference type="Gene3D" id="3.40.50.300">
    <property type="entry name" value="P-loop containing nucleotide triphosphate hydrolases"/>
    <property type="match status" value="1"/>
</dbReference>
<dbReference type="InterPro" id="IPR003959">
    <property type="entry name" value="ATPase_AAA_core"/>
</dbReference>
<dbReference type="InterPro" id="IPR027417">
    <property type="entry name" value="P-loop_NTPase"/>
</dbReference>
<dbReference type="InterPro" id="IPR044960">
    <property type="entry name" value="RCA-like"/>
</dbReference>
<dbReference type="InterPro" id="IPR048571">
    <property type="entry name" value="RuBisCO_activase_AAA_helical"/>
</dbReference>
<dbReference type="PANTHER" id="PTHR32429">
    <property type="match status" value="1"/>
</dbReference>
<dbReference type="PANTHER" id="PTHR32429:SF24">
    <property type="entry name" value="RIBULOSE BISPHOSPHATE CARBOXYLASE_OXYGENASE ACTIVASE, CHLOROPLASTIC"/>
    <property type="match status" value="1"/>
</dbReference>
<dbReference type="Pfam" id="PF00004">
    <property type="entry name" value="AAA"/>
    <property type="match status" value="1"/>
</dbReference>
<dbReference type="Pfam" id="PF21228">
    <property type="entry name" value="RuBisCO_activase_AAA_helical"/>
    <property type="match status" value="1"/>
</dbReference>
<dbReference type="SUPFAM" id="SSF52540">
    <property type="entry name" value="P-loop containing nucleoside triphosphate hydrolases"/>
    <property type="match status" value="1"/>
</dbReference>
<accession>Q40073</accession>
<accession>Q40071</accession>
<accession>Q40072</accession>
<accession>Q40074</accession>
<proteinExistence type="evidence at transcript level"/>
<keyword id="KW-0025">Alternative splicing</keyword>
<keyword id="KW-0067">ATP-binding</keyword>
<keyword id="KW-0150">Chloroplast</keyword>
<keyword id="KW-0547">Nucleotide-binding</keyword>
<keyword id="KW-0934">Plastid</keyword>
<keyword id="KW-0809">Transit peptide</keyword>
<comment type="function">
    <text>Activation of RuBisCO (ribulose-1,5-bisphosphate carboxylase/oxygenase; EC 4.1.1.39) involves the ATP-dependent carboxylation of the epsilon-amino group of lysine leading to a carbamate structure.</text>
</comment>
<comment type="subcellular location">
    <subcellularLocation>
        <location>Plastid</location>
        <location>Chloroplast stroma</location>
    </subcellularLocation>
</comment>
<comment type="alternative products">
    <event type="alternative splicing"/>
    <isoform>
        <id>Q40073-1</id>
        <name>Long</name>
        <name>RCAA1</name>
        <sequence type="displayed"/>
    </isoform>
    <isoform>
        <id>Q40073-2</id>
        <name>Short</name>
        <name>RCAA2</name>
        <sequence type="described" ref="VSP_005540"/>
    </isoform>
</comment>
<comment type="similarity">
    <text evidence="3">Belongs to the RuBisCO activase family.</text>
</comment>
<gene>
    <name type="primary">RCAA</name>
</gene>
<sequence>MAAAFSSTVGAPASTPTNFLGKKLKKQVTSAVNYHGKSSKANRFTVMAAENIDEKRNTDKWKGLAYDISDDQQDITRGKGIVDSLFQAPTGHGTHEAVLSSYEYVSQGLRKYDFDNTMGGFYIAPAFMDKLVVHLSKNFMTLPNIKIPLILGIWGGKGQGKSFQCELVFAKMGINPIMMSAGELESGNAGEPAKLIRQRYREAADMIKKGKMCCLFINDLDAGAGRMGGTTQYTVNNQMVNATLMNIADAPTNVQLPGMYNKRENPRVPIVVTGNDFSTLYAPLIRDGRMEKFYWAPTRDDRIGVCKGIFQTDNVSDESVVKIVDTFPGQSIDFFGALRARVYDDEVRKWVGSTGIENIGKRLVNSRDGPVTFEQPKMTVEKLLEYGHMLVQEQDNVKRVQLADTYMSQAALGDANQDAMKTGSFYGKGAQQGTLPVPEGCTDQNAKNYDPTARSDDGSCLYTF</sequence>
<reference key="1">
    <citation type="journal article" date="1991" name="J. Biol. Chem.">
        <title>Organization and expression of two tandemly oriented genes encoding ribulosebisphosphate carboxylase/oxygenase activase in barley.</title>
        <authorList>
            <person name="Rundle S.J."/>
            <person name="Zielinski R.E."/>
        </authorList>
    </citation>
    <scope>NUCLEOTIDE SEQUENCE [GENOMIC DNA / MRNA] (ISOFORMS LONG AND SHORT)</scope>
    <source>
        <strain>cv. Glen</strain>
        <strain>cv. Sundance</strain>
        <tissue>Leaf</tissue>
    </source>
</reference>
<name>RCAA_HORVU</name>